<name>LEPA_PROM9</name>
<protein>
    <recommendedName>
        <fullName evidence="1">Elongation factor 4</fullName>
        <shortName evidence="1">EF-4</shortName>
        <ecNumber evidence="1">3.6.5.n1</ecNumber>
    </recommendedName>
    <alternativeName>
        <fullName evidence="1">Ribosomal back-translocase LepA</fullName>
    </alternativeName>
</protein>
<gene>
    <name evidence="1" type="primary">lepA</name>
    <name type="ordered locus">PMT9312_0416</name>
</gene>
<reference key="1">
    <citation type="journal article" date="2006" name="Science">
        <title>Genomic islands and the ecology and evolution of Prochlorococcus.</title>
        <authorList>
            <person name="Coleman M.L."/>
            <person name="Sullivan M.B."/>
            <person name="Martiny A.C."/>
            <person name="Steglich C."/>
            <person name="Barry K."/>
            <person name="Delong E.F."/>
            <person name="Chisholm S.W."/>
        </authorList>
    </citation>
    <scope>NUCLEOTIDE SEQUENCE [LARGE SCALE GENOMIC DNA]</scope>
    <source>
        <strain>MIT 9312</strain>
    </source>
</reference>
<proteinExistence type="inferred from homology"/>
<sequence>MTDILVSKIRNFCIIAHIDHGKSTLADRLLQDTGTVQQRDMQEQFLDSMDLERERGITIKLQAARMKYKADDSQEYVLNLIDTPGHVDFSYEVSRSLQACEGALLVVDASQGVEAQTLANVYLALENNLEIIPVLNKVDLPGADAEKIKQEIEEIIGLDTSNAINCSAKTGVGIKDILEAIVRRVPAPQDEIKLPTKALIFDSYYDPYRGVIVYFRVISGSLNKREKILLMASKKNYELDEIGIMAPDQQQVDELHAGEVGYLAASIKSVADARVGDTITLLNSPANDPLPGYKTANPMVFCGLFPTDADQFPDLRVSLEKLQLSDAALKYEPETSSAMGFGFRCGFLGLLHMEIVQERLEREYDLDLIVTAPSVIYKVNLNQQEHIFIDNPSTIPDPQLRESIEEPYVKMEIYAPNEFNGTLMGLCQERRGVFIDMKYITTDRVTLIYEIPLAEVVTDFFDQMKSRTQGYASMEYHLIGYRKNDLVRLDVLINSERADPLTSIVHKDKAYGIGRSLVEKLKELIPKQQFKIPIQASIGSRIIASESISALRKDVLSKCYGGDISRKKKLLKKQAKGKKRMKAMGKVEVPQEAFMAVLKLNQ</sequence>
<organism>
    <name type="scientific">Prochlorococcus marinus (strain MIT 9312)</name>
    <dbReference type="NCBI Taxonomy" id="74546"/>
    <lineage>
        <taxon>Bacteria</taxon>
        <taxon>Bacillati</taxon>
        <taxon>Cyanobacteriota</taxon>
        <taxon>Cyanophyceae</taxon>
        <taxon>Synechococcales</taxon>
        <taxon>Prochlorococcaceae</taxon>
        <taxon>Prochlorococcus</taxon>
    </lineage>
</organism>
<keyword id="KW-0997">Cell inner membrane</keyword>
<keyword id="KW-1003">Cell membrane</keyword>
<keyword id="KW-0342">GTP-binding</keyword>
<keyword id="KW-0378">Hydrolase</keyword>
<keyword id="KW-0472">Membrane</keyword>
<keyword id="KW-0547">Nucleotide-binding</keyword>
<keyword id="KW-0648">Protein biosynthesis</keyword>
<comment type="function">
    <text evidence="1">Required for accurate and efficient protein synthesis under certain stress conditions. May act as a fidelity factor of the translation reaction, by catalyzing a one-codon backward translocation of tRNAs on improperly translocated ribosomes. Back-translocation proceeds from a post-translocation (POST) complex to a pre-translocation (PRE) complex, thus giving elongation factor G a second chance to translocate the tRNAs correctly. Binds to ribosomes in a GTP-dependent manner.</text>
</comment>
<comment type="catalytic activity">
    <reaction evidence="1">
        <text>GTP + H2O = GDP + phosphate + H(+)</text>
        <dbReference type="Rhea" id="RHEA:19669"/>
        <dbReference type="ChEBI" id="CHEBI:15377"/>
        <dbReference type="ChEBI" id="CHEBI:15378"/>
        <dbReference type="ChEBI" id="CHEBI:37565"/>
        <dbReference type="ChEBI" id="CHEBI:43474"/>
        <dbReference type="ChEBI" id="CHEBI:58189"/>
        <dbReference type="EC" id="3.6.5.n1"/>
    </reaction>
</comment>
<comment type="subcellular location">
    <subcellularLocation>
        <location evidence="1">Cell inner membrane</location>
        <topology evidence="1">Peripheral membrane protein</topology>
        <orientation evidence="1">Cytoplasmic side</orientation>
    </subcellularLocation>
</comment>
<comment type="similarity">
    <text evidence="1">Belongs to the TRAFAC class translation factor GTPase superfamily. Classic translation factor GTPase family. LepA subfamily.</text>
</comment>
<dbReference type="EC" id="3.6.5.n1" evidence="1"/>
<dbReference type="EMBL" id="CP000111">
    <property type="protein sequence ID" value="ABB49477.1"/>
    <property type="molecule type" value="Genomic_DNA"/>
</dbReference>
<dbReference type="RefSeq" id="WP_011375976.1">
    <property type="nucleotide sequence ID" value="NC_007577.1"/>
</dbReference>
<dbReference type="SMR" id="Q31CB8"/>
<dbReference type="STRING" id="74546.PMT9312_0416"/>
<dbReference type="KEGG" id="pmi:PMT9312_0416"/>
<dbReference type="eggNOG" id="COG0481">
    <property type="taxonomic scope" value="Bacteria"/>
</dbReference>
<dbReference type="HOGENOM" id="CLU_009995_3_3_3"/>
<dbReference type="OrthoDB" id="580826at2"/>
<dbReference type="Proteomes" id="UP000002715">
    <property type="component" value="Chromosome"/>
</dbReference>
<dbReference type="GO" id="GO:0005886">
    <property type="term" value="C:plasma membrane"/>
    <property type="evidence" value="ECO:0007669"/>
    <property type="project" value="UniProtKB-SubCell"/>
</dbReference>
<dbReference type="GO" id="GO:0005525">
    <property type="term" value="F:GTP binding"/>
    <property type="evidence" value="ECO:0007669"/>
    <property type="project" value="UniProtKB-KW"/>
</dbReference>
<dbReference type="GO" id="GO:0003924">
    <property type="term" value="F:GTPase activity"/>
    <property type="evidence" value="ECO:0007669"/>
    <property type="project" value="InterPro"/>
</dbReference>
<dbReference type="GO" id="GO:0043022">
    <property type="term" value="F:ribosome binding"/>
    <property type="evidence" value="ECO:0007669"/>
    <property type="project" value="TreeGrafter"/>
</dbReference>
<dbReference type="GO" id="GO:0045727">
    <property type="term" value="P:positive regulation of translation"/>
    <property type="evidence" value="ECO:0007669"/>
    <property type="project" value="TreeGrafter"/>
</dbReference>
<dbReference type="GO" id="GO:0006412">
    <property type="term" value="P:translation"/>
    <property type="evidence" value="ECO:0007669"/>
    <property type="project" value="UniProtKB-KW"/>
</dbReference>
<dbReference type="CDD" id="cd03699">
    <property type="entry name" value="EF4_II"/>
    <property type="match status" value="1"/>
</dbReference>
<dbReference type="CDD" id="cd16260">
    <property type="entry name" value="EF4_III"/>
    <property type="match status" value="1"/>
</dbReference>
<dbReference type="CDD" id="cd01890">
    <property type="entry name" value="LepA"/>
    <property type="match status" value="1"/>
</dbReference>
<dbReference type="CDD" id="cd03709">
    <property type="entry name" value="lepA_C"/>
    <property type="match status" value="1"/>
</dbReference>
<dbReference type="FunFam" id="3.40.50.300:FF:000078">
    <property type="entry name" value="Elongation factor 4"/>
    <property type="match status" value="1"/>
</dbReference>
<dbReference type="FunFam" id="2.40.30.10:FF:000015">
    <property type="entry name" value="Translation factor GUF1, mitochondrial"/>
    <property type="match status" value="1"/>
</dbReference>
<dbReference type="FunFam" id="3.30.70.240:FF:000007">
    <property type="entry name" value="Translation factor GUF1, mitochondrial"/>
    <property type="match status" value="1"/>
</dbReference>
<dbReference type="FunFam" id="3.30.70.2570:FF:000001">
    <property type="entry name" value="Translation factor GUF1, mitochondrial"/>
    <property type="match status" value="1"/>
</dbReference>
<dbReference type="FunFam" id="3.30.70.870:FF:000004">
    <property type="entry name" value="Translation factor GUF1, mitochondrial"/>
    <property type="match status" value="1"/>
</dbReference>
<dbReference type="Gene3D" id="3.30.70.240">
    <property type="match status" value="1"/>
</dbReference>
<dbReference type="Gene3D" id="3.30.70.2570">
    <property type="entry name" value="Elongation factor 4, C-terminal domain"/>
    <property type="match status" value="1"/>
</dbReference>
<dbReference type="Gene3D" id="3.30.70.870">
    <property type="entry name" value="Elongation Factor G (Translational Gtpase), domain 3"/>
    <property type="match status" value="1"/>
</dbReference>
<dbReference type="Gene3D" id="3.40.50.300">
    <property type="entry name" value="P-loop containing nucleotide triphosphate hydrolases"/>
    <property type="match status" value="1"/>
</dbReference>
<dbReference type="Gene3D" id="2.40.30.10">
    <property type="entry name" value="Translation factors"/>
    <property type="match status" value="1"/>
</dbReference>
<dbReference type="HAMAP" id="MF_03138">
    <property type="entry name" value="GUFP"/>
    <property type="match status" value="1"/>
</dbReference>
<dbReference type="HAMAP" id="MF_00071">
    <property type="entry name" value="LepA"/>
    <property type="match status" value="1"/>
</dbReference>
<dbReference type="InterPro" id="IPR006297">
    <property type="entry name" value="EF-4"/>
</dbReference>
<dbReference type="InterPro" id="IPR035647">
    <property type="entry name" value="EFG_III/V"/>
</dbReference>
<dbReference type="InterPro" id="IPR000640">
    <property type="entry name" value="EFG_V-like"/>
</dbReference>
<dbReference type="InterPro" id="IPR004161">
    <property type="entry name" value="EFTu-like_2"/>
</dbReference>
<dbReference type="InterPro" id="IPR031157">
    <property type="entry name" value="G_TR_CS"/>
</dbReference>
<dbReference type="InterPro" id="IPR027518">
    <property type="entry name" value="GUFP"/>
</dbReference>
<dbReference type="InterPro" id="IPR038363">
    <property type="entry name" value="LepA_C_sf"/>
</dbReference>
<dbReference type="InterPro" id="IPR013842">
    <property type="entry name" value="LepA_CTD"/>
</dbReference>
<dbReference type="InterPro" id="IPR035654">
    <property type="entry name" value="LepA_IV"/>
</dbReference>
<dbReference type="InterPro" id="IPR027417">
    <property type="entry name" value="P-loop_NTPase"/>
</dbReference>
<dbReference type="InterPro" id="IPR005225">
    <property type="entry name" value="Small_GTP-bd"/>
</dbReference>
<dbReference type="InterPro" id="IPR000795">
    <property type="entry name" value="T_Tr_GTP-bd_dom"/>
</dbReference>
<dbReference type="InterPro" id="IPR009000">
    <property type="entry name" value="Transl_B-barrel_sf"/>
</dbReference>
<dbReference type="NCBIfam" id="TIGR01393">
    <property type="entry name" value="lepA"/>
    <property type="match status" value="1"/>
</dbReference>
<dbReference type="NCBIfam" id="TIGR00231">
    <property type="entry name" value="small_GTP"/>
    <property type="match status" value="1"/>
</dbReference>
<dbReference type="PANTHER" id="PTHR43512:SF4">
    <property type="entry name" value="TRANSLATION FACTOR GUF1 HOMOLOG, CHLOROPLASTIC"/>
    <property type="match status" value="1"/>
</dbReference>
<dbReference type="PANTHER" id="PTHR43512">
    <property type="entry name" value="TRANSLATION FACTOR GUF1-RELATED"/>
    <property type="match status" value="1"/>
</dbReference>
<dbReference type="Pfam" id="PF00679">
    <property type="entry name" value="EFG_C"/>
    <property type="match status" value="1"/>
</dbReference>
<dbReference type="Pfam" id="PF00009">
    <property type="entry name" value="GTP_EFTU"/>
    <property type="match status" value="1"/>
</dbReference>
<dbReference type="Pfam" id="PF03144">
    <property type="entry name" value="GTP_EFTU_D2"/>
    <property type="match status" value="1"/>
</dbReference>
<dbReference type="Pfam" id="PF06421">
    <property type="entry name" value="LepA_C"/>
    <property type="match status" value="1"/>
</dbReference>
<dbReference type="PRINTS" id="PR00315">
    <property type="entry name" value="ELONGATNFCT"/>
</dbReference>
<dbReference type="SMART" id="SM00838">
    <property type="entry name" value="EFG_C"/>
    <property type="match status" value="1"/>
</dbReference>
<dbReference type="SUPFAM" id="SSF54980">
    <property type="entry name" value="EF-G C-terminal domain-like"/>
    <property type="match status" value="2"/>
</dbReference>
<dbReference type="SUPFAM" id="SSF52540">
    <property type="entry name" value="P-loop containing nucleoside triphosphate hydrolases"/>
    <property type="match status" value="1"/>
</dbReference>
<dbReference type="SUPFAM" id="SSF50447">
    <property type="entry name" value="Translation proteins"/>
    <property type="match status" value="1"/>
</dbReference>
<dbReference type="PROSITE" id="PS00301">
    <property type="entry name" value="G_TR_1"/>
    <property type="match status" value="1"/>
</dbReference>
<dbReference type="PROSITE" id="PS51722">
    <property type="entry name" value="G_TR_2"/>
    <property type="match status" value="1"/>
</dbReference>
<accession>Q31CB8</accession>
<evidence type="ECO:0000255" key="1">
    <source>
        <dbReference type="HAMAP-Rule" id="MF_00071"/>
    </source>
</evidence>
<feature type="chain" id="PRO_0000265685" description="Elongation factor 4">
    <location>
        <begin position="1"/>
        <end position="602"/>
    </location>
</feature>
<feature type="domain" description="tr-type G">
    <location>
        <begin position="7"/>
        <end position="189"/>
    </location>
</feature>
<feature type="binding site" evidence="1">
    <location>
        <begin position="19"/>
        <end position="24"/>
    </location>
    <ligand>
        <name>GTP</name>
        <dbReference type="ChEBI" id="CHEBI:37565"/>
    </ligand>
</feature>
<feature type="binding site" evidence="1">
    <location>
        <begin position="136"/>
        <end position="139"/>
    </location>
    <ligand>
        <name>GTP</name>
        <dbReference type="ChEBI" id="CHEBI:37565"/>
    </ligand>
</feature>